<proteinExistence type="inferred from homology"/>
<accession>A4TET2</accession>
<sequence length="286" mass="30265">MMRVGAITLDGKATRDEIFVDLRERVARLAAAGRTPGLATVLVGDDPGSHAYVRGKHADCAKVGINSIRRDLPADISQAVLDETIDELNANPECTGYIVQLPLPKHLNENAALERIDPSKDADGLHPTNLGRLVLNEPAPLPCTPRGIVHLLRRFEVEIAGAHVAVLGRGVTVGRPLGLLLTRRSENATVTLCHTATRHLPEITREADIIVAAAGVPHMVTADMVRPGAAVVDVGVSRDDAGKLVGDVHPGVWDVAGHVSPNPGGVGPLTRAFLLTNVVERAEANL</sequence>
<evidence type="ECO:0000255" key="1">
    <source>
        <dbReference type="HAMAP-Rule" id="MF_01576"/>
    </source>
</evidence>
<dbReference type="EC" id="1.5.1.5" evidence="1"/>
<dbReference type="EC" id="3.5.4.9" evidence="1"/>
<dbReference type="EMBL" id="CP000656">
    <property type="protein sequence ID" value="ABP47345.1"/>
    <property type="molecule type" value="Genomic_DNA"/>
</dbReference>
<dbReference type="SMR" id="A4TET2"/>
<dbReference type="STRING" id="350054.Mflv_4879"/>
<dbReference type="KEGG" id="mgi:Mflv_4879"/>
<dbReference type="eggNOG" id="COG0190">
    <property type="taxonomic scope" value="Bacteria"/>
</dbReference>
<dbReference type="HOGENOM" id="CLU_034045_3_0_11"/>
<dbReference type="OrthoDB" id="9803580at2"/>
<dbReference type="UniPathway" id="UPA00193"/>
<dbReference type="GO" id="GO:0005829">
    <property type="term" value="C:cytosol"/>
    <property type="evidence" value="ECO:0007669"/>
    <property type="project" value="TreeGrafter"/>
</dbReference>
<dbReference type="GO" id="GO:0004477">
    <property type="term" value="F:methenyltetrahydrofolate cyclohydrolase activity"/>
    <property type="evidence" value="ECO:0007669"/>
    <property type="project" value="UniProtKB-UniRule"/>
</dbReference>
<dbReference type="GO" id="GO:0004488">
    <property type="term" value="F:methylenetetrahydrofolate dehydrogenase (NADP+) activity"/>
    <property type="evidence" value="ECO:0007669"/>
    <property type="project" value="UniProtKB-UniRule"/>
</dbReference>
<dbReference type="GO" id="GO:0000105">
    <property type="term" value="P:L-histidine biosynthetic process"/>
    <property type="evidence" value="ECO:0007669"/>
    <property type="project" value="UniProtKB-KW"/>
</dbReference>
<dbReference type="GO" id="GO:0009086">
    <property type="term" value="P:methionine biosynthetic process"/>
    <property type="evidence" value="ECO:0007669"/>
    <property type="project" value="UniProtKB-KW"/>
</dbReference>
<dbReference type="GO" id="GO:0006164">
    <property type="term" value="P:purine nucleotide biosynthetic process"/>
    <property type="evidence" value="ECO:0007669"/>
    <property type="project" value="UniProtKB-KW"/>
</dbReference>
<dbReference type="GO" id="GO:0035999">
    <property type="term" value="P:tetrahydrofolate interconversion"/>
    <property type="evidence" value="ECO:0007669"/>
    <property type="project" value="UniProtKB-UniRule"/>
</dbReference>
<dbReference type="CDD" id="cd01080">
    <property type="entry name" value="NAD_bind_m-THF_DH_Cyclohyd"/>
    <property type="match status" value="1"/>
</dbReference>
<dbReference type="FunFam" id="3.40.50.720:FF:000094">
    <property type="entry name" value="Bifunctional protein FolD"/>
    <property type="match status" value="1"/>
</dbReference>
<dbReference type="FunFam" id="3.40.50.10860:FF:000005">
    <property type="entry name" value="C-1-tetrahydrofolate synthase, cytoplasmic, putative"/>
    <property type="match status" value="1"/>
</dbReference>
<dbReference type="Gene3D" id="3.40.50.10860">
    <property type="entry name" value="Leucine Dehydrogenase, chain A, domain 1"/>
    <property type="match status" value="1"/>
</dbReference>
<dbReference type="Gene3D" id="3.40.50.720">
    <property type="entry name" value="NAD(P)-binding Rossmann-like Domain"/>
    <property type="match status" value="1"/>
</dbReference>
<dbReference type="HAMAP" id="MF_01576">
    <property type="entry name" value="THF_DHG_CYH"/>
    <property type="match status" value="1"/>
</dbReference>
<dbReference type="InterPro" id="IPR046346">
    <property type="entry name" value="Aminoacid_DH-like_N_sf"/>
</dbReference>
<dbReference type="InterPro" id="IPR036291">
    <property type="entry name" value="NAD(P)-bd_dom_sf"/>
</dbReference>
<dbReference type="InterPro" id="IPR000672">
    <property type="entry name" value="THF_DH/CycHdrlase"/>
</dbReference>
<dbReference type="InterPro" id="IPR020630">
    <property type="entry name" value="THF_DH/CycHdrlase_cat_dom"/>
</dbReference>
<dbReference type="InterPro" id="IPR020631">
    <property type="entry name" value="THF_DH/CycHdrlase_NAD-bd_dom"/>
</dbReference>
<dbReference type="NCBIfam" id="NF010789">
    <property type="entry name" value="PRK14193.1"/>
    <property type="match status" value="1"/>
</dbReference>
<dbReference type="PANTHER" id="PTHR48099:SF5">
    <property type="entry name" value="C-1-TETRAHYDROFOLATE SYNTHASE, CYTOPLASMIC"/>
    <property type="match status" value="1"/>
</dbReference>
<dbReference type="PANTHER" id="PTHR48099">
    <property type="entry name" value="C-1-TETRAHYDROFOLATE SYNTHASE, CYTOPLASMIC-RELATED"/>
    <property type="match status" value="1"/>
</dbReference>
<dbReference type="Pfam" id="PF00763">
    <property type="entry name" value="THF_DHG_CYH"/>
    <property type="match status" value="1"/>
</dbReference>
<dbReference type="Pfam" id="PF02882">
    <property type="entry name" value="THF_DHG_CYH_C"/>
    <property type="match status" value="1"/>
</dbReference>
<dbReference type="PRINTS" id="PR00085">
    <property type="entry name" value="THFDHDRGNASE"/>
</dbReference>
<dbReference type="SUPFAM" id="SSF53223">
    <property type="entry name" value="Aminoacid dehydrogenase-like, N-terminal domain"/>
    <property type="match status" value="1"/>
</dbReference>
<dbReference type="SUPFAM" id="SSF51735">
    <property type="entry name" value="NAD(P)-binding Rossmann-fold domains"/>
    <property type="match status" value="1"/>
</dbReference>
<protein>
    <recommendedName>
        <fullName evidence="1">Bifunctional protein FolD</fullName>
    </recommendedName>
    <domain>
        <recommendedName>
            <fullName evidence="1">Methylenetetrahydrofolate dehydrogenase</fullName>
            <ecNumber evidence="1">1.5.1.5</ecNumber>
        </recommendedName>
    </domain>
    <domain>
        <recommendedName>
            <fullName evidence="1">Methenyltetrahydrofolate cyclohydrolase</fullName>
            <ecNumber evidence="1">3.5.4.9</ecNumber>
        </recommendedName>
    </domain>
</protein>
<reference key="1">
    <citation type="submission" date="2007-04" db="EMBL/GenBank/DDBJ databases">
        <title>Complete sequence of chromosome of Mycobacterium gilvum PYR-GCK.</title>
        <authorList>
            <consortium name="US DOE Joint Genome Institute"/>
            <person name="Copeland A."/>
            <person name="Lucas S."/>
            <person name="Lapidus A."/>
            <person name="Barry K."/>
            <person name="Detter J.C."/>
            <person name="Glavina del Rio T."/>
            <person name="Hammon N."/>
            <person name="Israni S."/>
            <person name="Dalin E."/>
            <person name="Tice H."/>
            <person name="Pitluck S."/>
            <person name="Chain P."/>
            <person name="Malfatti S."/>
            <person name="Shin M."/>
            <person name="Vergez L."/>
            <person name="Schmutz J."/>
            <person name="Larimer F."/>
            <person name="Land M."/>
            <person name="Hauser L."/>
            <person name="Kyrpides N."/>
            <person name="Mikhailova N."/>
            <person name="Miller C."/>
            <person name="Richardson P."/>
        </authorList>
    </citation>
    <scope>NUCLEOTIDE SEQUENCE [LARGE SCALE GENOMIC DNA]</scope>
    <source>
        <strain>PYR-GCK</strain>
    </source>
</reference>
<comment type="function">
    <text evidence="1">Catalyzes the oxidation of 5,10-methylenetetrahydrofolate to 5,10-methenyltetrahydrofolate and then the hydrolysis of 5,10-methenyltetrahydrofolate to 10-formyltetrahydrofolate.</text>
</comment>
<comment type="catalytic activity">
    <reaction evidence="1">
        <text>(6R)-5,10-methylene-5,6,7,8-tetrahydrofolate + NADP(+) = (6R)-5,10-methenyltetrahydrofolate + NADPH</text>
        <dbReference type="Rhea" id="RHEA:22812"/>
        <dbReference type="ChEBI" id="CHEBI:15636"/>
        <dbReference type="ChEBI" id="CHEBI:57455"/>
        <dbReference type="ChEBI" id="CHEBI:57783"/>
        <dbReference type="ChEBI" id="CHEBI:58349"/>
        <dbReference type="EC" id="1.5.1.5"/>
    </reaction>
</comment>
<comment type="catalytic activity">
    <reaction evidence="1">
        <text>(6R)-5,10-methenyltetrahydrofolate + H2O = (6R)-10-formyltetrahydrofolate + H(+)</text>
        <dbReference type="Rhea" id="RHEA:23700"/>
        <dbReference type="ChEBI" id="CHEBI:15377"/>
        <dbReference type="ChEBI" id="CHEBI:15378"/>
        <dbReference type="ChEBI" id="CHEBI:57455"/>
        <dbReference type="ChEBI" id="CHEBI:195366"/>
        <dbReference type="EC" id="3.5.4.9"/>
    </reaction>
</comment>
<comment type="pathway">
    <text evidence="1">One-carbon metabolism; tetrahydrofolate interconversion.</text>
</comment>
<comment type="subunit">
    <text evidence="1">Homodimer.</text>
</comment>
<comment type="similarity">
    <text evidence="1">Belongs to the tetrahydrofolate dehydrogenase/cyclohydrolase family.</text>
</comment>
<organism>
    <name type="scientific">Mycolicibacterium gilvum (strain PYR-GCK)</name>
    <name type="common">Mycobacterium gilvum (strain PYR-GCK)</name>
    <dbReference type="NCBI Taxonomy" id="350054"/>
    <lineage>
        <taxon>Bacteria</taxon>
        <taxon>Bacillati</taxon>
        <taxon>Actinomycetota</taxon>
        <taxon>Actinomycetes</taxon>
        <taxon>Mycobacteriales</taxon>
        <taxon>Mycobacteriaceae</taxon>
        <taxon>Mycolicibacterium</taxon>
    </lineage>
</organism>
<feature type="chain" id="PRO_1000087907" description="Bifunctional protein FolD">
    <location>
        <begin position="1"/>
        <end position="286"/>
    </location>
</feature>
<feature type="binding site" evidence="1">
    <location>
        <begin position="168"/>
        <end position="170"/>
    </location>
    <ligand>
        <name>NADP(+)</name>
        <dbReference type="ChEBI" id="CHEBI:58349"/>
    </ligand>
</feature>
<feature type="binding site" evidence="1">
    <location>
        <position position="195"/>
    </location>
    <ligand>
        <name>NADP(+)</name>
        <dbReference type="ChEBI" id="CHEBI:58349"/>
    </ligand>
</feature>
<feature type="binding site" evidence="1">
    <location>
        <position position="236"/>
    </location>
    <ligand>
        <name>NADP(+)</name>
        <dbReference type="ChEBI" id="CHEBI:58349"/>
    </ligand>
</feature>
<gene>
    <name evidence="1" type="primary">folD</name>
    <name type="ordered locus">Mflv_4879</name>
</gene>
<keyword id="KW-0028">Amino-acid biosynthesis</keyword>
<keyword id="KW-0368">Histidine biosynthesis</keyword>
<keyword id="KW-0378">Hydrolase</keyword>
<keyword id="KW-0486">Methionine biosynthesis</keyword>
<keyword id="KW-0511">Multifunctional enzyme</keyword>
<keyword id="KW-0521">NADP</keyword>
<keyword id="KW-0554">One-carbon metabolism</keyword>
<keyword id="KW-0560">Oxidoreductase</keyword>
<keyword id="KW-0658">Purine biosynthesis</keyword>
<name>FOLD_MYCGI</name>